<evidence type="ECO:0000255" key="1">
    <source>
        <dbReference type="HAMAP-Rule" id="MF_00275"/>
    </source>
</evidence>
<sequence>MEIILFLTMMVMITYVFSGYLYRVALVQSSRVDLIFTRFENMCFKIIGTDLEHMSAKTYVKHFLAFNGFMGFITFVLLIVQQWLFLNPNHNLNQSIDLAFNTAISFLTNSNLQHYNGESDVTYLTQMIVMTYLMFTSSASGYAVCIAMLRRLTGLTNIIGNFYQDIVRFIVRVLLPLSCLISILLMTQGVPQTLHANLMIRTLSGHIQHIAFGPIASLESIKHLGTNGGGFLAGNSATPFENPNIWSNFIEMGSMMLLPMSMLFLFGRMLSRHGKRVHRHALILFVAMFFIFIAILTLTMWSEYRGNPILANLGIYGPNMEGKEVRFGAGLSALFTVITTAFTTGSVNNMHDSLTPIGGLGPMVLMMLNVVFGGEGVGLMNLLIFVLLTVFICSLMVGKTPEYLNMPIGAREMKCIVLVFLIHPILILVFSALAFMIPGASESITNPSFHGISQVMYEMTSAAANNGSGFEGLKDDTTFWNISTGIIMLLSRYIPIILQLMIASSLVNKKSYHQDKYTIAIDKPYFGVSLIVFIVLLSGLTFIPVLLLGPIGEFLTLK</sequence>
<reference key="1">
    <citation type="journal article" date="2006" name="Lancet">
        <title>Complete genome sequence of USA300, an epidemic clone of community-acquired meticillin-resistant Staphylococcus aureus.</title>
        <authorList>
            <person name="Diep B.A."/>
            <person name="Gill S.R."/>
            <person name="Chang R.F."/>
            <person name="Phan T.H."/>
            <person name="Chen J.H."/>
            <person name="Davidson M.G."/>
            <person name="Lin F."/>
            <person name="Lin J."/>
            <person name="Carleton H.A."/>
            <person name="Mongodin E.F."/>
            <person name="Sensabaugh G.F."/>
            <person name="Perdreau-Remington F."/>
        </authorList>
    </citation>
    <scope>NUCLEOTIDE SEQUENCE [LARGE SCALE GENOMIC DNA]</scope>
    <source>
        <strain>USA300</strain>
    </source>
</reference>
<feature type="chain" id="PRO_1000022247" description="Potassium-transporting ATPase potassium-binding subunit">
    <location>
        <begin position="1"/>
        <end position="558"/>
    </location>
</feature>
<feature type="transmembrane region" description="Helical" evidence="1">
    <location>
        <begin position="1"/>
        <end position="21"/>
    </location>
</feature>
<feature type="transmembrane region" description="Helical" evidence="1">
    <location>
        <begin position="66"/>
        <end position="86"/>
    </location>
</feature>
<feature type="transmembrane region" description="Helical" evidence="1">
    <location>
        <begin position="127"/>
        <end position="147"/>
    </location>
</feature>
<feature type="transmembrane region" description="Helical" evidence="1">
    <location>
        <begin position="166"/>
        <end position="186"/>
    </location>
</feature>
<feature type="transmembrane region" description="Helical" evidence="1">
    <location>
        <begin position="245"/>
        <end position="265"/>
    </location>
</feature>
<feature type="transmembrane region" description="Helical" evidence="1">
    <location>
        <begin position="281"/>
        <end position="301"/>
    </location>
</feature>
<feature type="transmembrane region" description="Helical" evidence="1">
    <location>
        <begin position="327"/>
        <end position="347"/>
    </location>
</feature>
<feature type="transmembrane region" description="Helical" evidence="1">
    <location>
        <begin position="354"/>
        <end position="374"/>
    </location>
</feature>
<feature type="transmembrane region" description="Helical" evidence="1">
    <location>
        <begin position="377"/>
        <end position="397"/>
    </location>
</feature>
<feature type="transmembrane region" description="Helical" evidence="1">
    <location>
        <begin position="416"/>
        <end position="436"/>
    </location>
</feature>
<feature type="transmembrane region" description="Helical" evidence="1">
    <location>
        <begin position="482"/>
        <end position="502"/>
    </location>
</feature>
<feature type="transmembrane region" description="Helical" evidence="1">
    <location>
        <begin position="531"/>
        <end position="551"/>
    </location>
</feature>
<comment type="function">
    <text evidence="1">Part of the high-affinity ATP-driven potassium transport (or Kdp) system, which catalyzes the hydrolysis of ATP coupled with the electrogenic transport of potassium into the cytoplasm. This subunit binds the extracellular potassium ions and delivers the ions to the membrane domain of KdpB through an intramembrane tunnel.</text>
</comment>
<comment type="subunit">
    <text evidence="1">The system is composed of three essential subunits: KdpA, KdpB and KdpC.</text>
</comment>
<comment type="subcellular location">
    <subcellularLocation>
        <location evidence="1">Cell membrane</location>
        <topology evidence="1">Multi-pass membrane protein</topology>
    </subcellularLocation>
</comment>
<comment type="similarity">
    <text evidence="1">Belongs to the KdpA family.</text>
</comment>
<accession>Q2FF48</accession>
<protein>
    <recommendedName>
        <fullName evidence="1">Potassium-transporting ATPase potassium-binding subunit</fullName>
    </recommendedName>
    <alternativeName>
        <fullName evidence="1">ATP phosphohydrolase [potassium-transporting] A chain</fullName>
    </alternativeName>
    <alternativeName>
        <fullName evidence="1">Potassium-binding and translocating subunit A</fullName>
    </alternativeName>
    <alternativeName>
        <fullName evidence="1">Potassium-translocating ATPase A chain</fullName>
    </alternativeName>
</protein>
<proteinExistence type="inferred from homology"/>
<name>KDPA_STAA3</name>
<keyword id="KW-1003">Cell membrane</keyword>
<keyword id="KW-0406">Ion transport</keyword>
<keyword id="KW-0472">Membrane</keyword>
<keyword id="KW-0630">Potassium</keyword>
<keyword id="KW-0633">Potassium transport</keyword>
<keyword id="KW-0812">Transmembrane</keyword>
<keyword id="KW-1133">Transmembrane helix</keyword>
<keyword id="KW-0813">Transport</keyword>
<gene>
    <name evidence="1" type="primary">kdpA</name>
    <name type="ordered locus">SAUSA300_2034</name>
</gene>
<organism>
    <name type="scientific">Staphylococcus aureus (strain USA300)</name>
    <dbReference type="NCBI Taxonomy" id="367830"/>
    <lineage>
        <taxon>Bacteria</taxon>
        <taxon>Bacillati</taxon>
        <taxon>Bacillota</taxon>
        <taxon>Bacilli</taxon>
        <taxon>Bacillales</taxon>
        <taxon>Staphylococcaceae</taxon>
        <taxon>Staphylococcus</taxon>
    </lineage>
</organism>
<dbReference type="EMBL" id="CP000255">
    <property type="protein sequence ID" value="ABD21670.1"/>
    <property type="molecule type" value="Genomic_DNA"/>
</dbReference>
<dbReference type="RefSeq" id="WP_000402656.1">
    <property type="nucleotide sequence ID" value="NZ_CP027476.1"/>
</dbReference>
<dbReference type="SMR" id="Q2FF48"/>
<dbReference type="KEGG" id="saa:SAUSA300_2034"/>
<dbReference type="HOGENOM" id="CLU_018614_3_0_9"/>
<dbReference type="OMA" id="WQNYGGE"/>
<dbReference type="Proteomes" id="UP000001939">
    <property type="component" value="Chromosome"/>
</dbReference>
<dbReference type="GO" id="GO:0005886">
    <property type="term" value="C:plasma membrane"/>
    <property type="evidence" value="ECO:0007669"/>
    <property type="project" value="UniProtKB-SubCell"/>
</dbReference>
<dbReference type="GO" id="GO:0008556">
    <property type="term" value="F:P-type potassium transmembrane transporter activity"/>
    <property type="evidence" value="ECO:0007669"/>
    <property type="project" value="InterPro"/>
</dbReference>
<dbReference type="GO" id="GO:0030955">
    <property type="term" value="F:potassium ion binding"/>
    <property type="evidence" value="ECO:0007669"/>
    <property type="project" value="UniProtKB-UniRule"/>
</dbReference>
<dbReference type="HAMAP" id="MF_00275">
    <property type="entry name" value="KdpA"/>
    <property type="match status" value="1"/>
</dbReference>
<dbReference type="InterPro" id="IPR004623">
    <property type="entry name" value="KdpA"/>
</dbReference>
<dbReference type="NCBIfam" id="TIGR00680">
    <property type="entry name" value="kdpA"/>
    <property type="match status" value="1"/>
</dbReference>
<dbReference type="PANTHER" id="PTHR30607">
    <property type="entry name" value="POTASSIUM-TRANSPORTING ATPASE A CHAIN"/>
    <property type="match status" value="1"/>
</dbReference>
<dbReference type="PANTHER" id="PTHR30607:SF2">
    <property type="entry name" value="POTASSIUM-TRANSPORTING ATPASE POTASSIUM-BINDING SUBUNIT"/>
    <property type="match status" value="1"/>
</dbReference>
<dbReference type="Pfam" id="PF03814">
    <property type="entry name" value="KdpA"/>
    <property type="match status" value="1"/>
</dbReference>
<dbReference type="PIRSF" id="PIRSF001294">
    <property type="entry name" value="K_ATPaseA"/>
    <property type="match status" value="1"/>
</dbReference>